<accession>Q6FKB6</accession>
<evidence type="ECO:0000250" key="1"/>
<evidence type="ECO:0000255" key="2">
    <source>
        <dbReference type="PROSITE-ProRule" id="PRU01133"/>
    </source>
</evidence>
<proteinExistence type="inferred from homology"/>
<protein>
    <recommendedName>
        <fullName>Translationally-controlled tumor protein homolog</fullName>
        <shortName>TCTP</shortName>
    </recommendedName>
</protein>
<sequence length="167" mass="18681">MIIYKDIFSGDELLSDAYDINEVDGVIYEADCAMVKVGGDNIDIGANPSTEDGEDDVEDGTEVVNNVVHSFRLQPTGFDKKSFLTYIKGYMKAVKAKLQEKNPDAIPTFEKGAQVYVKKVIGSFKDWEFFTGESMDPDAMVVMLNYREDGTTPFVAIWKHGIDEEKI</sequence>
<name>TCTP_CANGA</name>
<organism>
    <name type="scientific">Candida glabrata (strain ATCC 2001 / BCRC 20586 / JCM 3761 / NBRC 0622 / NRRL Y-65 / CBS 138)</name>
    <name type="common">Yeast</name>
    <name type="synonym">Nakaseomyces glabratus</name>
    <dbReference type="NCBI Taxonomy" id="284593"/>
    <lineage>
        <taxon>Eukaryota</taxon>
        <taxon>Fungi</taxon>
        <taxon>Dikarya</taxon>
        <taxon>Ascomycota</taxon>
        <taxon>Saccharomycotina</taxon>
        <taxon>Saccharomycetes</taxon>
        <taxon>Saccharomycetales</taxon>
        <taxon>Saccharomycetaceae</taxon>
        <taxon>Nakaseomyces</taxon>
    </lineage>
</organism>
<dbReference type="EMBL" id="CR380958">
    <property type="protein sequence ID" value="CAG62302.1"/>
    <property type="molecule type" value="Genomic_DNA"/>
</dbReference>
<dbReference type="RefSeq" id="XP_449328.1">
    <property type="nucleotide sequence ID" value="XM_449328.1"/>
</dbReference>
<dbReference type="SMR" id="Q6FKB6"/>
<dbReference type="FunCoup" id="Q6FKB6">
    <property type="interactions" value="932"/>
</dbReference>
<dbReference type="STRING" id="284593.Q6FKB6"/>
<dbReference type="EnsemblFungi" id="CAGL0L12870g-T">
    <property type="protein sequence ID" value="CAGL0L12870g-T-p1"/>
    <property type="gene ID" value="CAGL0L12870g"/>
</dbReference>
<dbReference type="KEGG" id="cgr:2890578"/>
<dbReference type="CGD" id="CAL0136162">
    <property type="gene designation" value="CAGL0L12870g"/>
</dbReference>
<dbReference type="VEuPathDB" id="FungiDB:B1J91_L12870g"/>
<dbReference type="VEuPathDB" id="FungiDB:CAGL0L12870g"/>
<dbReference type="eggNOG" id="KOG1727">
    <property type="taxonomic scope" value="Eukaryota"/>
</dbReference>
<dbReference type="HOGENOM" id="CLU_095877_0_0_1"/>
<dbReference type="InParanoid" id="Q6FKB6"/>
<dbReference type="OMA" id="CAMITEG"/>
<dbReference type="Proteomes" id="UP000002428">
    <property type="component" value="Chromosome L"/>
</dbReference>
<dbReference type="GO" id="GO:0005829">
    <property type="term" value="C:cytosol"/>
    <property type="evidence" value="ECO:0007669"/>
    <property type="project" value="EnsemblFungi"/>
</dbReference>
<dbReference type="GO" id="GO:0005874">
    <property type="term" value="C:microtubule"/>
    <property type="evidence" value="ECO:0007669"/>
    <property type="project" value="UniProtKB-KW"/>
</dbReference>
<dbReference type="GO" id="GO:0005739">
    <property type="term" value="C:mitochondrion"/>
    <property type="evidence" value="ECO:0007669"/>
    <property type="project" value="EnsemblFungi"/>
</dbReference>
<dbReference type="GO" id="GO:0005509">
    <property type="term" value="F:calcium ion binding"/>
    <property type="evidence" value="ECO:0007669"/>
    <property type="project" value="TreeGrafter"/>
</dbReference>
<dbReference type="GO" id="GO:0002181">
    <property type="term" value="P:cytoplasmic translation"/>
    <property type="evidence" value="ECO:0007669"/>
    <property type="project" value="EnsemblFungi"/>
</dbReference>
<dbReference type="GO" id="GO:0010507">
    <property type="term" value="P:negative regulation of autophagy"/>
    <property type="evidence" value="ECO:0007669"/>
    <property type="project" value="EnsemblFungi"/>
</dbReference>
<dbReference type="GO" id="GO:0007026">
    <property type="term" value="P:negative regulation of microtubule depolymerization"/>
    <property type="evidence" value="ECO:0007669"/>
    <property type="project" value="EnsemblFungi"/>
</dbReference>
<dbReference type="FunFam" id="2.170.150.10:FF:000002">
    <property type="entry name" value="Translationally-controlled tumor protein homolog"/>
    <property type="match status" value="1"/>
</dbReference>
<dbReference type="Gene3D" id="2.170.150.10">
    <property type="entry name" value="Metal Binding Protein, Guanine Nucleotide Exchange Factor, Chain A"/>
    <property type="match status" value="1"/>
</dbReference>
<dbReference type="InterPro" id="IPR011057">
    <property type="entry name" value="Mss4-like_sf"/>
</dbReference>
<dbReference type="InterPro" id="IPR011323">
    <property type="entry name" value="Mss4/transl-control_tumour"/>
</dbReference>
<dbReference type="InterPro" id="IPR034737">
    <property type="entry name" value="TCTP"/>
</dbReference>
<dbReference type="InterPro" id="IPR018103">
    <property type="entry name" value="Translation_control_tumour_CS"/>
</dbReference>
<dbReference type="InterPro" id="IPR018105">
    <property type="entry name" value="Translational_control_tumour_p"/>
</dbReference>
<dbReference type="PANTHER" id="PTHR11991">
    <property type="entry name" value="TRANSLATIONALLY CONTROLLED TUMOR PROTEIN-RELATED"/>
    <property type="match status" value="1"/>
</dbReference>
<dbReference type="PANTHER" id="PTHR11991:SF0">
    <property type="entry name" value="TRANSLATIONALLY-CONTROLLED TUMOR PROTEIN"/>
    <property type="match status" value="1"/>
</dbReference>
<dbReference type="Pfam" id="PF00838">
    <property type="entry name" value="TCTP"/>
    <property type="match status" value="1"/>
</dbReference>
<dbReference type="PRINTS" id="PR01653">
    <property type="entry name" value="TCTPROTEIN"/>
</dbReference>
<dbReference type="SUPFAM" id="SSF51316">
    <property type="entry name" value="Mss4-like"/>
    <property type="match status" value="1"/>
</dbReference>
<dbReference type="PROSITE" id="PS01002">
    <property type="entry name" value="TCTP_1"/>
    <property type="match status" value="1"/>
</dbReference>
<dbReference type="PROSITE" id="PS01003">
    <property type="entry name" value="TCTP_2"/>
    <property type="match status" value="1"/>
</dbReference>
<dbReference type="PROSITE" id="PS51797">
    <property type="entry name" value="TCTP_3"/>
    <property type="match status" value="1"/>
</dbReference>
<feature type="chain" id="PRO_0000252320" description="Translationally-controlled tumor protein homolog">
    <location>
        <begin position="1"/>
        <end position="167"/>
    </location>
</feature>
<feature type="domain" description="TCTP" evidence="2">
    <location>
        <begin position="1"/>
        <end position="167"/>
    </location>
</feature>
<reference key="1">
    <citation type="journal article" date="2004" name="Nature">
        <title>Genome evolution in yeasts.</title>
        <authorList>
            <person name="Dujon B."/>
            <person name="Sherman D."/>
            <person name="Fischer G."/>
            <person name="Durrens P."/>
            <person name="Casaregola S."/>
            <person name="Lafontaine I."/>
            <person name="de Montigny J."/>
            <person name="Marck C."/>
            <person name="Neuveglise C."/>
            <person name="Talla E."/>
            <person name="Goffard N."/>
            <person name="Frangeul L."/>
            <person name="Aigle M."/>
            <person name="Anthouard V."/>
            <person name="Babour A."/>
            <person name="Barbe V."/>
            <person name="Barnay S."/>
            <person name="Blanchin S."/>
            <person name="Beckerich J.-M."/>
            <person name="Beyne E."/>
            <person name="Bleykasten C."/>
            <person name="Boisrame A."/>
            <person name="Boyer J."/>
            <person name="Cattolico L."/>
            <person name="Confanioleri F."/>
            <person name="de Daruvar A."/>
            <person name="Despons L."/>
            <person name="Fabre E."/>
            <person name="Fairhead C."/>
            <person name="Ferry-Dumazet H."/>
            <person name="Groppi A."/>
            <person name="Hantraye F."/>
            <person name="Hennequin C."/>
            <person name="Jauniaux N."/>
            <person name="Joyet P."/>
            <person name="Kachouri R."/>
            <person name="Kerrest A."/>
            <person name="Koszul R."/>
            <person name="Lemaire M."/>
            <person name="Lesur I."/>
            <person name="Ma L."/>
            <person name="Muller H."/>
            <person name="Nicaud J.-M."/>
            <person name="Nikolski M."/>
            <person name="Oztas S."/>
            <person name="Ozier-Kalogeropoulos O."/>
            <person name="Pellenz S."/>
            <person name="Potier S."/>
            <person name="Richard G.-F."/>
            <person name="Straub M.-L."/>
            <person name="Suleau A."/>
            <person name="Swennen D."/>
            <person name="Tekaia F."/>
            <person name="Wesolowski-Louvel M."/>
            <person name="Westhof E."/>
            <person name="Wirth B."/>
            <person name="Zeniou-Meyer M."/>
            <person name="Zivanovic Y."/>
            <person name="Bolotin-Fukuhara M."/>
            <person name="Thierry A."/>
            <person name="Bouchier C."/>
            <person name="Caudron B."/>
            <person name="Scarpelli C."/>
            <person name="Gaillardin C."/>
            <person name="Weissenbach J."/>
            <person name="Wincker P."/>
            <person name="Souciet J.-L."/>
        </authorList>
    </citation>
    <scope>NUCLEOTIDE SEQUENCE [LARGE SCALE GENOMIC DNA]</scope>
    <source>
        <strain>ATCC 2001 / BCRC 20586 / JCM 3761 / NBRC 0622 / NRRL Y-65 / CBS 138</strain>
    </source>
</reference>
<gene>
    <name type="ordered locus">CAGL0L12870g</name>
</gene>
<comment type="function">
    <text evidence="1">Involved in protein synthesis. Involved in microtubule stabilization (By similarity).</text>
</comment>
<comment type="subcellular location">
    <subcellularLocation>
        <location evidence="1">Cytoplasm</location>
        <location evidence="1">Cytoskeleton</location>
    </subcellularLocation>
</comment>
<comment type="similarity">
    <text evidence="2">Belongs to the TCTP family.</text>
</comment>
<keyword id="KW-0963">Cytoplasm</keyword>
<keyword id="KW-0206">Cytoskeleton</keyword>
<keyword id="KW-0493">Microtubule</keyword>
<keyword id="KW-0648">Protein biosynthesis</keyword>
<keyword id="KW-1185">Reference proteome</keyword>